<organism>
    <name type="scientific">Mycobacterium tuberculosis (strain ATCC 25618 / H37Rv)</name>
    <dbReference type="NCBI Taxonomy" id="83332"/>
    <lineage>
        <taxon>Bacteria</taxon>
        <taxon>Bacillati</taxon>
        <taxon>Actinomycetota</taxon>
        <taxon>Actinomycetes</taxon>
        <taxon>Mycobacteriales</taxon>
        <taxon>Mycobacteriaceae</taxon>
        <taxon>Mycobacterium</taxon>
        <taxon>Mycobacterium tuberculosis complex</taxon>
    </lineage>
</organism>
<gene>
    <name type="ordered locus">Rv0095c</name>
    <name type="ORF">MTCY251.14c</name>
</gene>
<accession>Q10891</accession>
<accession>L0T2K8</accession>
<sequence length="98" mass="10947">MLANSREELVEVFDALDADLDRLDEVSFEVLSTPERLRSLERLECLARRLPAAQHTLINQLDTQASEEELGGTLCCALANRLRITKPEAGRRSAEAKP</sequence>
<protein>
    <recommendedName>
        <fullName>Putative uncharacterized protein Rv0095c</fullName>
    </recommendedName>
</protein>
<reference key="1">
    <citation type="journal article" date="1998" name="Nature">
        <title>Deciphering the biology of Mycobacterium tuberculosis from the complete genome sequence.</title>
        <authorList>
            <person name="Cole S.T."/>
            <person name="Brosch R."/>
            <person name="Parkhill J."/>
            <person name="Garnier T."/>
            <person name="Churcher C.M."/>
            <person name="Harris D.E."/>
            <person name="Gordon S.V."/>
            <person name="Eiglmeier K."/>
            <person name="Gas S."/>
            <person name="Barry C.E. III"/>
            <person name="Tekaia F."/>
            <person name="Badcock K."/>
            <person name="Basham D."/>
            <person name="Brown D."/>
            <person name="Chillingworth T."/>
            <person name="Connor R."/>
            <person name="Davies R.M."/>
            <person name="Devlin K."/>
            <person name="Feltwell T."/>
            <person name="Gentles S."/>
            <person name="Hamlin N."/>
            <person name="Holroyd S."/>
            <person name="Hornsby T."/>
            <person name="Jagels K."/>
            <person name="Krogh A."/>
            <person name="McLean J."/>
            <person name="Moule S."/>
            <person name="Murphy L.D."/>
            <person name="Oliver S."/>
            <person name="Osborne J."/>
            <person name="Quail M.A."/>
            <person name="Rajandream M.A."/>
            <person name="Rogers J."/>
            <person name="Rutter S."/>
            <person name="Seeger K."/>
            <person name="Skelton S."/>
            <person name="Squares S."/>
            <person name="Squares R."/>
            <person name="Sulston J.E."/>
            <person name="Taylor K."/>
            <person name="Whitehead S."/>
            <person name="Barrell B.G."/>
        </authorList>
    </citation>
    <scope>NUCLEOTIDE SEQUENCE [LARGE SCALE GENOMIC DNA]</scope>
    <source>
        <strain>ATCC 25618 / H37Rv</strain>
    </source>
</reference>
<dbReference type="EMBL" id="AL123456">
    <property type="protein sequence ID" value="CCP42820.1"/>
    <property type="status" value="ALT_INIT"/>
    <property type="molecule type" value="Genomic_DNA"/>
</dbReference>
<dbReference type="PIR" id="G70750">
    <property type="entry name" value="G70750"/>
</dbReference>
<dbReference type="RefSeq" id="NP_214609.1">
    <property type="nucleotide sequence ID" value="NC_000962.3"/>
</dbReference>
<dbReference type="RefSeq" id="WP_003900805.1">
    <property type="nucleotide sequence ID" value="NC_000962.3"/>
</dbReference>
<dbReference type="STRING" id="83332.Rv0095c"/>
<dbReference type="PaxDb" id="83332-Rv0095c"/>
<dbReference type="DNASU" id="886940"/>
<dbReference type="GeneID" id="886940"/>
<dbReference type="KEGG" id="mtu:Rv0095c"/>
<dbReference type="PATRIC" id="fig|83332.12.peg.109"/>
<dbReference type="TubercuList" id="Rv0095c"/>
<dbReference type="eggNOG" id="COG1403">
    <property type="taxonomic scope" value="Bacteria"/>
</dbReference>
<dbReference type="InParanoid" id="Q10891"/>
<dbReference type="OrthoDB" id="4752052at2"/>
<dbReference type="Proteomes" id="UP000001584">
    <property type="component" value="Chromosome"/>
</dbReference>
<dbReference type="InterPro" id="IPR003870">
    <property type="entry name" value="DUF222"/>
</dbReference>
<dbReference type="Pfam" id="PF02720">
    <property type="entry name" value="DUF222"/>
    <property type="match status" value="1"/>
</dbReference>
<feature type="chain" id="PRO_0000103667" description="Putative uncharacterized protein Rv0095c">
    <location>
        <begin position="1"/>
        <end position="98"/>
    </location>
</feature>
<comment type="similarity">
    <text evidence="1">Belongs to the Rv1128c/1148c/1588c/1702c/1945/3466 family.</text>
</comment>
<comment type="caution">
    <text evidence="1">Could be the product of a pseudogene.</text>
</comment>
<comment type="sequence caution" evidence="1">
    <conflict type="erroneous initiation">
        <sequence resource="EMBL-CDS" id="CCP42820"/>
    </conflict>
    <text>Extended N-terminus.</text>
</comment>
<name>Y095_MYCTU</name>
<proteinExistence type="uncertain"/>
<keyword id="KW-1185">Reference proteome</keyword>
<evidence type="ECO:0000305" key="1"/>